<sequence>MPQNTLNIVILAAGKGTRMYSKMPKVLHRIGGKPMVGRVIDTAAALNPQNICVVIGHGKEQVLDTVKRDVVWVEQTEQLGTGHAVKTALPHLSAEGRTLVLYGDVPLIDVETLETLLEAAGNEVGLLTDVPNDPTGLGRIIRDSNGSVTAIVEEKDADAVQKAVKEINTGILVLPNAKLENWLNSLSSNNAQGEYYLTDLIAKAVADGIKVHPVQVRASHLAAGVNNKLQLTELERIFQTEQAQELLKAGVTLRDPARFDLRGRLKHGQDVVIDVNCIFEGDIELGDNVEIGANCVIKNAKIGANSKIAPFSHLESCEVGENNRIGPYARLRPQARLADDVHVGNFVEIKNAAIGKGTKANHLTYIGDAEVGCKTNFGAGTIIANYDGVHKHKTVIGDEVRIGSNCVLVAPVTLGNKVTTGAGSTITRNVEDNKLALARARQTVIEGWVRPEKDKQ</sequence>
<reference key="1">
    <citation type="journal article" date="2000" name="Science">
        <title>Complete genome sequence of Neisseria meningitidis serogroup B strain MC58.</title>
        <authorList>
            <person name="Tettelin H."/>
            <person name="Saunders N.J."/>
            <person name="Heidelberg J.F."/>
            <person name="Jeffries A.C."/>
            <person name="Nelson K.E."/>
            <person name="Eisen J.A."/>
            <person name="Ketchum K.A."/>
            <person name="Hood D.W."/>
            <person name="Peden J.F."/>
            <person name="Dodson R.J."/>
            <person name="Nelson W.C."/>
            <person name="Gwinn M.L."/>
            <person name="DeBoy R.T."/>
            <person name="Peterson J.D."/>
            <person name="Hickey E.K."/>
            <person name="Haft D.H."/>
            <person name="Salzberg S.L."/>
            <person name="White O."/>
            <person name="Fleischmann R.D."/>
            <person name="Dougherty B.A."/>
            <person name="Mason T.M."/>
            <person name="Ciecko A."/>
            <person name="Parksey D.S."/>
            <person name="Blair E."/>
            <person name="Cittone H."/>
            <person name="Clark E.B."/>
            <person name="Cotton M.D."/>
            <person name="Utterback T.R."/>
            <person name="Khouri H.M."/>
            <person name="Qin H."/>
            <person name="Vamathevan J.J."/>
            <person name="Gill J."/>
            <person name="Scarlato V."/>
            <person name="Masignani V."/>
            <person name="Pizza M."/>
            <person name="Grandi G."/>
            <person name="Sun L."/>
            <person name="Smith H.O."/>
            <person name="Fraser C.M."/>
            <person name="Moxon E.R."/>
            <person name="Rappuoli R."/>
            <person name="Venter J.C."/>
        </authorList>
    </citation>
    <scope>NUCLEOTIDE SEQUENCE [LARGE SCALE GENOMIC DNA]</scope>
    <source>
        <strain>ATCC BAA-335 / MC58</strain>
    </source>
</reference>
<protein>
    <recommendedName>
        <fullName evidence="1">Bifunctional protein GlmU</fullName>
    </recommendedName>
    <domain>
        <recommendedName>
            <fullName evidence="1">UDP-N-acetylglucosamine pyrophosphorylase</fullName>
            <ecNumber evidence="1">2.7.7.23</ecNumber>
        </recommendedName>
        <alternativeName>
            <fullName evidence="1">N-acetylglucosamine-1-phosphate uridyltransferase</fullName>
        </alternativeName>
    </domain>
    <domain>
        <recommendedName>
            <fullName evidence="1">Glucosamine-1-phosphate N-acetyltransferase</fullName>
            <ecNumber evidence="1">2.3.1.157</ecNumber>
        </recommendedName>
    </domain>
</protein>
<dbReference type="EC" id="2.7.7.23" evidence="1"/>
<dbReference type="EC" id="2.3.1.157" evidence="1"/>
<dbReference type="EMBL" id="AE002098">
    <property type="protein sequence ID" value="AAF40509.1"/>
    <property type="molecule type" value="Genomic_DNA"/>
</dbReference>
<dbReference type="PIR" id="H81244">
    <property type="entry name" value="H81244"/>
</dbReference>
<dbReference type="RefSeq" id="NP_273104.1">
    <property type="nucleotide sequence ID" value="NC_003112.2"/>
</dbReference>
<dbReference type="RefSeq" id="WP_002225769.1">
    <property type="nucleotide sequence ID" value="NC_003112.2"/>
</dbReference>
<dbReference type="SMR" id="Q9K1P3"/>
<dbReference type="FunCoup" id="Q9K1P3">
    <property type="interactions" value="448"/>
</dbReference>
<dbReference type="STRING" id="122586.NMB0038"/>
<dbReference type="PaxDb" id="122586-NMB0038"/>
<dbReference type="KEGG" id="nme:NMB0038"/>
<dbReference type="PATRIC" id="fig|122586.8.peg.53"/>
<dbReference type="HOGENOM" id="CLU_029499_15_2_4"/>
<dbReference type="InParanoid" id="Q9K1P3"/>
<dbReference type="OrthoDB" id="9775031at2"/>
<dbReference type="UniPathway" id="UPA00113">
    <property type="reaction ID" value="UER00532"/>
</dbReference>
<dbReference type="UniPathway" id="UPA00113">
    <property type="reaction ID" value="UER00533"/>
</dbReference>
<dbReference type="UniPathway" id="UPA00973"/>
<dbReference type="Proteomes" id="UP000000425">
    <property type="component" value="Chromosome"/>
</dbReference>
<dbReference type="GO" id="GO:0005737">
    <property type="term" value="C:cytoplasm"/>
    <property type="evidence" value="ECO:0007669"/>
    <property type="project" value="UniProtKB-SubCell"/>
</dbReference>
<dbReference type="GO" id="GO:0016020">
    <property type="term" value="C:membrane"/>
    <property type="evidence" value="ECO:0007669"/>
    <property type="project" value="GOC"/>
</dbReference>
<dbReference type="GO" id="GO:0019134">
    <property type="term" value="F:glucosamine-1-phosphate N-acetyltransferase activity"/>
    <property type="evidence" value="ECO:0007669"/>
    <property type="project" value="UniProtKB-UniRule"/>
</dbReference>
<dbReference type="GO" id="GO:0000287">
    <property type="term" value="F:magnesium ion binding"/>
    <property type="evidence" value="ECO:0007669"/>
    <property type="project" value="UniProtKB-UniRule"/>
</dbReference>
<dbReference type="GO" id="GO:0003977">
    <property type="term" value="F:UDP-N-acetylglucosamine diphosphorylase activity"/>
    <property type="evidence" value="ECO:0007669"/>
    <property type="project" value="UniProtKB-UniRule"/>
</dbReference>
<dbReference type="GO" id="GO:0000902">
    <property type="term" value="P:cell morphogenesis"/>
    <property type="evidence" value="ECO:0007669"/>
    <property type="project" value="UniProtKB-UniRule"/>
</dbReference>
<dbReference type="GO" id="GO:0071555">
    <property type="term" value="P:cell wall organization"/>
    <property type="evidence" value="ECO:0007669"/>
    <property type="project" value="UniProtKB-KW"/>
</dbReference>
<dbReference type="GO" id="GO:0009245">
    <property type="term" value="P:lipid A biosynthetic process"/>
    <property type="evidence" value="ECO:0007669"/>
    <property type="project" value="UniProtKB-UniRule"/>
</dbReference>
<dbReference type="GO" id="GO:0009252">
    <property type="term" value="P:peptidoglycan biosynthetic process"/>
    <property type="evidence" value="ECO:0007669"/>
    <property type="project" value="UniProtKB-UniRule"/>
</dbReference>
<dbReference type="GO" id="GO:0008360">
    <property type="term" value="P:regulation of cell shape"/>
    <property type="evidence" value="ECO:0007669"/>
    <property type="project" value="UniProtKB-KW"/>
</dbReference>
<dbReference type="GO" id="GO:0006048">
    <property type="term" value="P:UDP-N-acetylglucosamine biosynthetic process"/>
    <property type="evidence" value="ECO:0007669"/>
    <property type="project" value="UniProtKB-UniPathway"/>
</dbReference>
<dbReference type="CDD" id="cd02540">
    <property type="entry name" value="GT2_GlmU_N_bac"/>
    <property type="match status" value="1"/>
</dbReference>
<dbReference type="CDD" id="cd03353">
    <property type="entry name" value="LbH_GlmU_C"/>
    <property type="match status" value="1"/>
</dbReference>
<dbReference type="Gene3D" id="2.160.10.10">
    <property type="entry name" value="Hexapeptide repeat proteins"/>
    <property type="match status" value="1"/>
</dbReference>
<dbReference type="Gene3D" id="3.90.550.10">
    <property type="entry name" value="Spore Coat Polysaccharide Biosynthesis Protein SpsA, Chain A"/>
    <property type="match status" value="1"/>
</dbReference>
<dbReference type="HAMAP" id="MF_01631">
    <property type="entry name" value="GlmU"/>
    <property type="match status" value="1"/>
</dbReference>
<dbReference type="InterPro" id="IPR005882">
    <property type="entry name" value="Bifunctional_GlmU"/>
</dbReference>
<dbReference type="InterPro" id="IPR050065">
    <property type="entry name" value="GlmU-like"/>
</dbReference>
<dbReference type="InterPro" id="IPR038009">
    <property type="entry name" value="GlmU_C_LbH"/>
</dbReference>
<dbReference type="InterPro" id="IPR001451">
    <property type="entry name" value="Hexapep"/>
</dbReference>
<dbReference type="InterPro" id="IPR025877">
    <property type="entry name" value="MobA-like_NTP_Trfase"/>
</dbReference>
<dbReference type="InterPro" id="IPR029044">
    <property type="entry name" value="Nucleotide-diphossugar_trans"/>
</dbReference>
<dbReference type="InterPro" id="IPR011004">
    <property type="entry name" value="Trimer_LpxA-like_sf"/>
</dbReference>
<dbReference type="NCBIfam" id="TIGR01173">
    <property type="entry name" value="glmU"/>
    <property type="match status" value="1"/>
</dbReference>
<dbReference type="PANTHER" id="PTHR43584:SF3">
    <property type="entry name" value="BIFUNCTIONAL PROTEIN GLMU"/>
    <property type="match status" value="1"/>
</dbReference>
<dbReference type="PANTHER" id="PTHR43584">
    <property type="entry name" value="NUCLEOTIDYL TRANSFERASE"/>
    <property type="match status" value="1"/>
</dbReference>
<dbReference type="Pfam" id="PF00132">
    <property type="entry name" value="Hexapep"/>
    <property type="match status" value="3"/>
</dbReference>
<dbReference type="Pfam" id="PF12804">
    <property type="entry name" value="NTP_transf_3"/>
    <property type="match status" value="1"/>
</dbReference>
<dbReference type="SUPFAM" id="SSF53448">
    <property type="entry name" value="Nucleotide-diphospho-sugar transferases"/>
    <property type="match status" value="1"/>
</dbReference>
<dbReference type="SUPFAM" id="SSF51161">
    <property type="entry name" value="Trimeric LpxA-like enzymes"/>
    <property type="match status" value="1"/>
</dbReference>
<keyword id="KW-0012">Acyltransferase</keyword>
<keyword id="KW-0133">Cell shape</keyword>
<keyword id="KW-0961">Cell wall biogenesis/degradation</keyword>
<keyword id="KW-0963">Cytoplasm</keyword>
<keyword id="KW-0460">Magnesium</keyword>
<keyword id="KW-0479">Metal-binding</keyword>
<keyword id="KW-0511">Multifunctional enzyme</keyword>
<keyword id="KW-0548">Nucleotidyltransferase</keyword>
<keyword id="KW-0573">Peptidoglycan synthesis</keyword>
<keyword id="KW-1185">Reference proteome</keyword>
<keyword id="KW-0677">Repeat</keyword>
<keyword id="KW-0808">Transferase</keyword>
<evidence type="ECO:0000255" key="1">
    <source>
        <dbReference type="HAMAP-Rule" id="MF_01631"/>
    </source>
</evidence>
<organism>
    <name type="scientific">Neisseria meningitidis serogroup B (strain ATCC BAA-335 / MC58)</name>
    <dbReference type="NCBI Taxonomy" id="122586"/>
    <lineage>
        <taxon>Bacteria</taxon>
        <taxon>Pseudomonadati</taxon>
        <taxon>Pseudomonadota</taxon>
        <taxon>Betaproteobacteria</taxon>
        <taxon>Neisseriales</taxon>
        <taxon>Neisseriaceae</taxon>
        <taxon>Neisseria</taxon>
    </lineage>
</organism>
<comment type="function">
    <text evidence="1">Catalyzes the last two sequential reactions in the de novo biosynthetic pathway for UDP-N-acetylglucosamine (UDP-GlcNAc). The C-terminal domain catalyzes the transfer of acetyl group from acetyl coenzyme A to glucosamine-1-phosphate (GlcN-1-P) to produce N-acetylglucosamine-1-phosphate (GlcNAc-1-P), which is converted into UDP-GlcNAc by the transfer of uridine 5-monophosphate (from uridine 5-triphosphate), a reaction catalyzed by the N-terminal domain.</text>
</comment>
<comment type="catalytic activity">
    <reaction evidence="1">
        <text>alpha-D-glucosamine 1-phosphate + acetyl-CoA = N-acetyl-alpha-D-glucosamine 1-phosphate + CoA + H(+)</text>
        <dbReference type="Rhea" id="RHEA:13725"/>
        <dbReference type="ChEBI" id="CHEBI:15378"/>
        <dbReference type="ChEBI" id="CHEBI:57287"/>
        <dbReference type="ChEBI" id="CHEBI:57288"/>
        <dbReference type="ChEBI" id="CHEBI:57776"/>
        <dbReference type="ChEBI" id="CHEBI:58516"/>
        <dbReference type="EC" id="2.3.1.157"/>
    </reaction>
</comment>
<comment type="catalytic activity">
    <reaction evidence="1">
        <text>N-acetyl-alpha-D-glucosamine 1-phosphate + UTP + H(+) = UDP-N-acetyl-alpha-D-glucosamine + diphosphate</text>
        <dbReference type="Rhea" id="RHEA:13509"/>
        <dbReference type="ChEBI" id="CHEBI:15378"/>
        <dbReference type="ChEBI" id="CHEBI:33019"/>
        <dbReference type="ChEBI" id="CHEBI:46398"/>
        <dbReference type="ChEBI" id="CHEBI:57705"/>
        <dbReference type="ChEBI" id="CHEBI:57776"/>
        <dbReference type="EC" id="2.7.7.23"/>
    </reaction>
</comment>
<comment type="cofactor">
    <cofactor evidence="1">
        <name>Mg(2+)</name>
        <dbReference type="ChEBI" id="CHEBI:18420"/>
    </cofactor>
    <text evidence="1">Binds 1 Mg(2+) ion per subunit.</text>
</comment>
<comment type="pathway">
    <text evidence="1">Nucleotide-sugar biosynthesis; UDP-N-acetyl-alpha-D-glucosamine biosynthesis; N-acetyl-alpha-D-glucosamine 1-phosphate from alpha-D-glucosamine 6-phosphate (route II): step 2/2.</text>
</comment>
<comment type="pathway">
    <text evidence="1">Nucleotide-sugar biosynthesis; UDP-N-acetyl-alpha-D-glucosamine biosynthesis; UDP-N-acetyl-alpha-D-glucosamine from N-acetyl-alpha-D-glucosamine 1-phosphate: step 1/1.</text>
</comment>
<comment type="pathway">
    <text evidence="1">Bacterial outer membrane biogenesis; LPS lipid A biosynthesis.</text>
</comment>
<comment type="subunit">
    <text evidence="1">Homotrimer.</text>
</comment>
<comment type="subcellular location">
    <subcellularLocation>
        <location evidence="1">Cytoplasm</location>
    </subcellularLocation>
</comment>
<comment type="similarity">
    <text evidence="1">In the N-terminal section; belongs to the N-acetylglucosamine-1-phosphate uridyltransferase family.</text>
</comment>
<comment type="similarity">
    <text evidence="1">In the C-terminal section; belongs to the transferase hexapeptide repeat family.</text>
</comment>
<proteinExistence type="inferred from homology"/>
<accession>Q9K1P3</accession>
<gene>
    <name evidence="1" type="primary">glmU</name>
    <name type="ordered locus">NMB0038</name>
</gene>
<name>GLMU_NEIMB</name>
<feature type="chain" id="PRO_0000233805" description="Bifunctional protein GlmU">
    <location>
        <begin position="1"/>
        <end position="456"/>
    </location>
</feature>
<feature type="region of interest" description="Pyrophosphorylase" evidence="1">
    <location>
        <begin position="1"/>
        <end position="228"/>
    </location>
</feature>
<feature type="region of interest" description="Linker" evidence="1">
    <location>
        <begin position="229"/>
        <end position="249"/>
    </location>
</feature>
<feature type="region of interest" description="N-acetyltransferase" evidence="1">
    <location>
        <begin position="250"/>
        <end position="456"/>
    </location>
</feature>
<feature type="active site" description="Proton acceptor" evidence="1">
    <location>
        <position position="362"/>
    </location>
</feature>
<feature type="binding site" evidence="1">
    <location>
        <begin position="11"/>
        <end position="14"/>
    </location>
    <ligand>
        <name>UDP-N-acetyl-alpha-D-glucosamine</name>
        <dbReference type="ChEBI" id="CHEBI:57705"/>
    </ligand>
</feature>
<feature type="binding site" evidence="1">
    <location>
        <position position="25"/>
    </location>
    <ligand>
        <name>UDP-N-acetyl-alpha-D-glucosamine</name>
        <dbReference type="ChEBI" id="CHEBI:57705"/>
    </ligand>
</feature>
<feature type="binding site" evidence="1">
    <location>
        <position position="75"/>
    </location>
    <ligand>
        <name>UDP-N-acetyl-alpha-D-glucosamine</name>
        <dbReference type="ChEBI" id="CHEBI:57705"/>
    </ligand>
</feature>
<feature type="binding site" evidence="1">
    <location>
        <begin position="80"/>
        <end position="81"/>
    </location>
    <ligand>
        <name>UDP-N-acetyl-alpha-D-glucosamine</name>
        <dbReference type="ChEBI" id="CHEBI:57705"/>
    </ligand>
</feature>
<feature type="binding site" evidence="1">
    <location>
        <begin position="102"/>
        <end position="104"/>
    </location>
    <ligand>
        <name>UDP-N-acetyl-alpha-D-glucosamine</name>
        <dbReference type="ChEBI" id="CHEBI:57705"/>
    </ligand>
</feature>
<feature type="binding site" evidence="1">
    <location>
        <position position="104"/>
    </location>
    <ligand>
        <name>Mg(2+)</name>
        <dbReference type="ChEBI" id="CHEBI:18420"/>
    </ligand>
</feature>
<feature type="binding site" evidence="1">
    <location>
        <position position="138"/>
    </location>
    <ligand>
        <name>UDP-N-acetyl-alpha-D-glucosamine</name>
        <dbReference type="ChEBI" id="CHEBI:57705"/>
    </ligand>
</feature>
<feature type="binding site" evidence="1">
    <location>
        <position position="153"/>
    </location>
    <ligand>
        <name>UDP-N-acetyl-alpha-D-glucosamine</name>
        <dbReference type="ChEBI" id="CHEBI:57705"/>
    </ligand>
</feature>
<feature type="binding site" evidence="1">
    <location>
        <position position="168"/>
    </location>
    <ligand>
        <name>UDP-N-acetyl-alpha-D-glucosamine</name>
        <dbReference type="ChEBI" id="CHEBI:57705"/>
    </ligand>
</feature>
<feature type="binding site" evidence="1">
    <location>
        <position position="226"/>
    </location>
    <ligand>
        <name>Mg(2+)</name>
        <dbReference type="ChEBI" id="CHEBI:18420"/>
    </ligand>
</feature>
<feature type="binding site" evidence="1">
    <location>
        <position position="226"/>
    </location>
    <ligand>
        <name>UDP-N-acetyl-alpha-D-glucosamine</name>
        <dbReference type="ChEBI" id="CHEBI:57705"/>
    </ligand>
</feature>
<feature type="binding site" evidence="1">
    <location>
        <position position="332"/>
    </location>
    <ligand>
        <name>UDP-N-acetyl-alpha-D-glucosamine</name>
        <dbReference type="ChEBI" id="CHEBI:57705"/>
    </ligand>
</feature>
<feature type="binding site" evidence="1">
    <location>
        <position position="350"/>
    </location>
    <ligand>
        <name>UDP-N-acetyl-alpha-D-glucosamine</name>
        <dbReference type="ChEBI" id="CHEBI:57705"/>
    </ligand>
</feature>
<feature type="binding site" evidence="1">
    <location>
        <position position="365"/>
    </location>
    <ligand>
        <name>UDP-N-acetyl-alpha-D-glucosamine</name>
        <dbReference type="ChEBI" id="CHEBI:57705"/>
    </ligand>
</feature>
<feature type="binding site" evidence="1">
    <location>
        <position position="376"/>
    </location>
    <ligand>
        <name>UDP-N-acetyl-alpha-D-glucosamine</name>
        <dbReference type="ChEBI" id="CHEBI:57705"/>
    </ligand>
</feature>
<feature type="binding site" evidence="1">
    <location>
        <position position="379"/>
    </location>
    <ligand>
        <name>acetyl-CoA</name>
        <dbReference type="ChEBI" id="CHEBI:57288"/>
    </ligand>
</feature>
<feature type="binding site" evidence="1">
    <location>
        <begin position="385"/>
        <end position="386"/>
    </location>
    <ligand>
        <name>acetyl-CoA</name>
        <dbReference type="ChEBI" id="CHEBI:57288"/>
    </ligand>
</feature>
<feature type="binding site" evidence="1">
    <location>
        <position position="404"/>
    </location>
    <ligand>
        <name>acetyl-CoA</name>
        <dbReference type="ChEBI" id="CHEBI:57288"/>
    </ligand>
</feature>
<feature type="binding site" evidence="1">
    <location>
        <position position="422"/>
    </location>
    <ligand>
        <name>acetyl-CoA</name>
        <dbReference type="ChEBI" id="CHEBI:57288"/>
    </ligand>
</feature>
<feature type="binding site" evidence="1">
    <location>
        <position position="439"/>
    </location>
    <ligand>
        <name>acetyl-CoA</name>
        <dbReference type="ChEBI" id="CHEBI:57288"/>
    </ligand>
</feature>